<feature type="chain" id="PRO_0000128428" description="Ribonuclease P protein component 1">
    <location>
        <begin position="1"/>
        <end position="110"/>
    </location>
</feature>
<comment type="function">
    <text evidence="1">Part of ribonuclease P, a protein complex that generates mature tRNA molecules by cleaving their 5'-ends.</text>
</comment>
<comment type="catalytic activity">
    <reaction evidence="1">
        <text>Endonucleolytic cleavage of RNA, removing 5'-extranucleotides from tRNA precursor.</text>
        <dbReference type="EC" id="3.1.26.5"/>
    </reaction>
</comment>
<comment type="subunit">
    <text evidence="1">Consists of a catalytic RNA component and at least 4-5 protein subunits.</text>
</comment>
<comment type="subcellular location">
    <subcellularLocation>
        <location evidence="1">Cytoplasm</location>
    </subcellularLocation>
</comment>
<comment type="similarity">
    <text evidence="1">Belongs to the eukaryotic/archaeal RNase P protein component 1 family.</text>
</comment>
<reference key="1">
    <citation type="journal article" date="2002" name="Genome Res.">
        <title>The genome of Methanosarcina acetivorans reveals extensive metabolic and physiological diversity.</title>
        <authorList>
            <person name="Galagan J.E."/>
            <person name="Nusbaum C."/>
            <person name="Roy A."/>
            <person name="Endrizzi M.G."/>
            <person name="Macdonald P."/>
            <person name="FitzHugh W."/>
            <person name="Calvo S."/>
            <person name="Engels R."/>
            <person name="Smirnov S."/>
            <person name="Atnoor D."/>
            <person name="Brown A."/>
            <person name="Allen N."/>
            <person name="Naylor J."/>
            <person name="Stange-Thomann N."/>
            <person name="DeArellano K."/>
            <person name="Johnson R."/>
            <person name="Linton L."/>
            <person name="McEwan P."/>
            <person name="McKernan K."/>
            <person name="Talamas J."/>
            <person name="Tirrell A."/>
            <person name="Ye W."/>
            <person name="Zimmer A."/>
            <person name="Barber R.D."/>
            <person name="Cann I."/>
            <person name="Graham D.E."/>
            <person name="Grahame D.A."/>
            <person name="Guss A.M."/>
            <person name="Hedderich R."/>
            <person name="Ingram-Smith C."/>
            <person name="Kuettner H.C."/>
            <person name="Krzycki J.A."/>
            <person name="Leigh J.A."/>
            <person name="Li W."/>
            <person name="Liu J."/>
            <person name="Mukhopadhyay B."/>
            <person name="Reeve J.N."/>
            <person name="Smith K."/>
            <person name="Springer T.A."/>
            <person name="Umayam L.A."/>
            <person name="White O."/>
            <person name="White R.H."/>
            <person name="de Macario E.C."/>
            <person name="Ferry J.G."/>
            <person name="Jarrell K.F."/>
            <person name="Jing H."/>
            <person name="Macario A.J.L."/>
            <person name="Paulsen I.T."/>
            <person name="Pritchett M."/>
            <person name="Sowers K.R."/>
            <person name="Swanson R.V."/>
            <person name="Zinder S.H."/>
            <person name="Lander E."/>
            <person name="Metcalf W.W."/>
            <person name="Birren B."/>
        </authorList>
    </citation>
    <scope>NUCLEOTIDE SEQUENCE [LARGE SCALE GENOMIC DNA]</scope>
    <source>
        <strain>ATCC 35395 / DSM 2834 / JCM 12185 / C2A</strain>
    </source>
</reference>
<organism>
    <name type="scientific">Methanosarcina acetivorans (strain ATCC 35395 / DSM 2834 / JCM 12185 / C2A)</name>
    <dbReference type="NCBI Taxonomy" id="188937"/>
    <lineage>
        <taxon>Archaea</taxon>
        <taxon>Methanobacteriati</taxon>
        <taxon>Methanobacteriota</taxon>
        <taxon>Stenosarchaea group</taxon>
        <taxon>Methanomicrobia</taxon>
        <taxon>Methanosarcinales</taxon>
        <taxon>Methanosarcinaceae</taxon>
        <taxon>Methanosarcina</taxon>
    </lineage>
</organism>
<name>RNP1_METAC</name>
<proteinExistence type="inferred from homology"/>
<accession>Q8TRT9</accession>
<gene>
    <name evidence="1" type="primary">rnp1</name>
    <name type="ordered locus">MA_1080</name>
</gene>
<evidence type="ECO:0000255" key="1">
    <source>
        <dbReference type="HAMAP-Rule" id="MF_00754"/>
    </source>
</evidence>
<protein>
    <recommendedName>
        <fullName evidence="1">Ribonuclease P protein component 1</fullName>
        <shortName evidence="1">RNase P component 1</shortName>
        <ecNumber evidence="1">3.1.26.5</ecNumber>
    </recommendedName>
    <alternativeName>
        <fullName evidence="1">Rpp29</fullName>
    </alternativeName>
</protein>
<sequence length="110" mass="12610">MRSKVEILPSNLIFHELIGLEIKVINSTNPSLTGIRGRVINETKNMLVVENSQSRELKIPKADSEFLFRIPAELSEKGRRSDTFVKIQGNLLLSQPENRIKNIKKLRKWG</sequence>
<dbReference type="EC" id="3.1.26.5" evidence="1"/>
<dbReference type="EMBL" id="AE010299">
    <property type="protein sequence ID" value="AAM04505.1"/>
    <property type="molecule type" value="Genomic_DNA"/>
</dbReference>
<dbReference type="RefSeq" id="WP_011021109.1">
    <property type="nucleotide sequence ID" value="NC_003552.1"/>
</dbReference>
<dbReference type="SMR" id="Q8TRT9"/>
<dbReference type="FunCoup" id="Q8TRT9">
    <property type="interactions" value="2"/>
</dbReference>
<dbReference type="STRING" id="188937.MA_1080"/>
<dbReference type="EnsemblBacteria" id="AAM04505">
    <property type="protein sequence ID" value="AAM04505"/>
    <property type="gene ID" value="MA_1080"/>
</dbReference>
<dbReference type="GeneID" id="1472970"/>
<dbReference type="KEGG" id="mac:MA_1080"/>
<dbReference type="HOGENOM" id="CLU_107020_2_0_2"/>
<dbReference type="InParanoid" id="Q8TRT9"/>
<dbReference type="OrthoDB" id="39019at2157"/>
<dbReference type="PhylomeDB" id="Q8TRT9"/>
<dbReference type="Proteomes" id="UP000002487">
    <property type="component" value="Chromosome"/>
</dbReference>
<dbReference type="GO" id="GO:0005737">
    <property type="term" value="C:cytoplasm"/>
    <property type="evidence" value="ECO:0007669"/>
    <property type="project" value="UniProtKB-SubCell"/>
</dbReference>
<dbReference type="GO" id="GO:0030677">
    <property type="term" value="C:ribonuclease P complex"/>
    <property type="evidence" value="ECO:0007669"/>
    <property type="project" value="UniProtKB-UniRule"/>
</dbReference>
<dbReference type="GO" id="GO:0004526">
    <property type="term" value="F:ribonuclease P activity"/>
    <property type="evidence" value="ECO:0007669"/>
    <property type="project" value="UniProtKB-UniRule"/>
</dbReference>
<dbReference type="GO" id="GO:0003723">
    <property type="term" value="F:RNA binding"/>
    <property type="evidence" value="ECO:0007669"/>
    <property type="project" value="InterPro"/>
</dbReference>
<dbReference type="GO" id="GO:0001682">
    <property type="term" value="P:tRNA 5'-leader removal"/>
    <property type="evidence" value="ECO:0007669"/>
    <property type="project" value="UniProtKB-UniRule"/>
</dbReference>
<dbReference type="Gene3D" id="2.30.30.210">
    <property type="entry name" value="Ribonuclease P/MRP, subunit p29"/>
    <property type="match status" value="1"/>
</dbReference>
<dbReference type="HAMAP" id="MF_00754">
    <property type="entry name" value="RNase_P_1"/>
    <property type="match status" value="1"/>
</dbReference>
<dbReference type="InterPro" id="IPR036980">
    <property type="entry name" value="RNase_P/MRP_Rpp29_sf"/>
</dbReference>
<dbReference type="InterPro" id="IPR023538">
    <property type="entry name" value="RNP1"/>
</dbReference>
<dbReference type="InterPro" id="IPR023534">
    <property type="entry name" value="Rof/RNase_P-like"/>
</dbReference>
<dbReference type="InterPro" id="IPR002730">
    <property type="entry name" value="Rpp29/RNP1"/>
</dbReference>
<dbReference type="NCBIfam" id="NF046110">
    <property type="entry name" value="RNaseP1Mthb"/>
    <property type="match status" value="1"/>
</dbReference>
<dbReference type="Pfam" id="PF01868">
    <property type="entry name" value="RNase_P-MRP_p29"/>
    <property type="match status" value="1"/>
</dbReference>
<dbReference type="SMART" id="SM00538">
    <property type="entry name" value="POP4"/>
    <property type="match status" value="1"/>
</dbReference>
<dbReference type="SUPFAM" id="SSF101744">
    <property type="entry name" value="Rof/RNase P subunit-like"/>
    <property type="match status" value="1"/>
</dbReference>
<keyword id="KW-0963">Cytoplasm</keyword>
<keyword id="KW-0255">Endonuclease</keyword>
<keyword id="KW-0378">Hydrolase</keyword>
<keyword id="KW-0540">Nuclease</keyword>
<keyword id="KW-1185">Reference proteome</keyword>
<keyword id="KW-0819">tRNA processing</keyword>